<organism>
    <name type="scientific">Buchnera aphidicola subsp. Schizaphis graminum (strain Sg)</name>
    <dbReference type="NCBI Taxonomy" id="198804"/>
    <lineage>
        <taxon>Bacteria</taxon>
        <taxon>Pseudomonadati</taxon>
        <taxon>Pseudomonadota</taxon>
        <taxon>Gammaproteobacteria</taxon>
        <taxon>Enterobacterales</taxon>
        <taxon>Erwiniaceae</taxon>
        <taxon>Buchnera</taxon>
    </lineage>
</organism>
<name>RL29_BUCAP</name>
<keyword id="KW-0687">Ribonucleoprotein</keyword>
<keyword id="KW-0689">Ribosomal protein</keyword>
<sequence length="65" mass="7873">MKEIIKFRKKNRQDLNIELLQLLREQFNLRMQSASGKLKQPHLLRKVRKNIAQVKMLLKEKECVK</sequence>
<protein>
    <recommendedName>
        <fullName evidence="1">Large ribosomal subunit protein uL29</fullName>
    </recommendedName>
    <alternativeName>
        <fullName evidence="2">50S ribosomal protein L29</fullName>
    </alternativeName>
</protein>
<feature type="chain" id="PRO_0000130365" description="Large ribosomal subunit protein uL29">
    <location>
        <begin position="1"/>
        <end position="65"/>
    </location>
</feature>
<dbReference type="EMBL" id="AE013218">
    <property type="protein sequence ID" value="AAM68040.1"/>
    <property type="molecule type" value="Genomic_DNA"/>
</dbReference>
<dbReference type="RefSeq" id="WP_011054006.1">
    <property type="nucleotide sequence ID" value="NC_004061.1"/>
</dbReference>
<dbReference type="SMR" id="Q8K958"/>
<dbReference type="STRING" id="198804.BUsg_497"/>
<dbReference type="GeneID" id="93003972"/>
<dbReference type="KEGG" id="bas:BUsg_497"/>
<dbReference type="eggNOG" id="COG0255">
    <property type="taxonomic scope" value="Bacteria"/>
</dbReference>
<dbReference type="HOGENOM" id="CLU_158491_1_2_6"/>
<dbReference type="Proteomes" id="UP000000416">
    <property type="component" value="Chromosome"/>
</dbReference>
<dbReference type="GO" id="GO:0022625">
    <property type="term" value="C:cytosolic large ribosomal subunit"/>
    <property type="evidence" value="ECO:0007669"/>
    <property type="project" value="TreeGrafter"/>
</dbReference>
<dbReference type="GO" id="GO:0003735">
    <property type="term" value="F:structural constituent of ribosome"/>
    <property type="evidence" value="ECO:0007669"/>
    <property type="project" value="InterPro"/>
</dbReference>
<dbReference type="GO" id="GO:0006412">
    <property type="term" value="P:translation"/>
    <property type="evidence" value="ECO:0007669"/>
    <property type="project" value="UniProtKB-UniRule"/>
</dbReference>
<dbReference type="CDD" id="cd00427">
    <property type="entry name" value="Ribosomal_L29_HIP"/>
    <property type="match status" value="1"/>
</dbReference>
<dbReference type="FunFam" id="1.10.287.310:FF:000001">
    <property type="entry name" value="50S ribosomal protein L29"/>
    <property type="match status" value="1"/>
</dbReference>
<dbReference type="Gene3D" id="6.10.140.1970">
    <property type="match status" value="1"/>
</dbReference>
<dbReference type="HAMAP" id="MF_00374">
    <property type="entry name" value="Ribosomal_uL29"/>
    <property type="match status" value="1"/>
</dbReference>
<dbReference type="InterPro" id="IPR050063">
    <property type="entry name" value="Ribosomal_protein_uL29"/>
</dbReference>
<dbReference type="InterPro" id="IPR001854">
    <property type="entry name" value="Ribosomal_uL29"/>
</dbReference>
<dbReference type="InterPro" id="IPR018254">
    <property type="entry name" value="Ribosomal_uL29_CS"/>
</dbReference>
<dbReference type="InterPro" id="IPR036049">
    <property type="entry name" value="Ribosomal_uL29_sf"/>
</dbReference>
<dbReference type="NCBIfam" id="TIGR00012">
    <property type="entry name" value="L29"/>
    <property type="match status" value="1"/>
</dbReference>
<dbReference type="PANTHER" id="PTHR10916">
    <property type="entry name" value="60S RIBOSOMAL PROTEIN L35/50S RIBOSOMAL PROTEIN L29"/>
    <property type="match status" value="1"/>
</dbReference>
<dbReference type="PANTHER" id="PTHR10916:SF0">
    <property type="entry name" value="LARGE RIBOSOMAL SUBUNIT PROTEIN UL29C"/>
    <property type="match status" value="1"/>
</dbReference>
<dbReference type="Pfam" id="PF00831">
    <property type="entry name" value="Ribosomal_L29"/>
    <property type="match status" value="1"/>
</dbReference>
<dbReference type="SUPFAM" id="SSF46561">
    <property type="entry name" value="Ribosomal protein L29 (L29p)"/>
    <property type="match status" value="1"/>
</dbReference>
<dbReference type="PROSITE" id="PS00579">
    <property type="entry name" value="RIBOSOMAL_L29"/>
    <property type="match status" value="1"/>
</dbReference>
<reference key="1">
    <citation type="journal article" date="2002" name="Science">
        <title>50 million years of genomic stasis in endosymbiotic bacteria.</title>
        <authorList>
            <person name="Tamas I."/>
            <person name="Klasson L."/>
            <person name="Canbaeck B."/>
            <person name="Naeslund A.K."/>
            <person name="Eriksson A.-S."/>
            <person name="Wernegreen J.J."/>
            <person name="Sandstroem J.P."/>
            <person name="Moran N.A."/>
            <person name="Andersson S.G.E."/>
        </authorList>
    </citation>
    <scope>NUCLEOTIDE SEQUENCE [LARGE SCALE GENOMIC DNA]</scope>
    <source>
        <strain>Sg</strain>
    </source>
</reference>
<proteinExistence type="inferred from homology"/>
<evidence type="ECO:0000255" key="1">
    <source>
        <dbReference type="HAMAP-Rule" id="MF_00374"/>
    </source>
</evidence>
<evidence type="ECO:0000305" key="2"/>
<comment type="similarity">
    <text evidence="1">Belongs to the universal ribosomal protein uL29 family.</text>
</comment>
<gene>
    <name evidence="1" type="primary">rpmC</name>
    <name type="ordered locus">BUsg_497</name>
</gene>
<accession>Q8K958</accession>